<name>TRPF_XYLFT</name>
<comment type="catalytic activity">
    <reaction evidence="1">
        <text>N-(5-phospho-beta-D-ribosyl)anthranilate = 1-(2-carboxyphenylamino)-1-deoxy-D-ribulose 5-phosphate</text>
        <dbReference type="Rhea" id="RHEA:21540"/>
        <dbReference type="ChEBI" id="CHEBI:18277"/>
        <dbReference type="ChEBI" id="CHEBI:58613"/>
        <dbReference type="EC" id="5.3.1.24"/>
    </reaction>
</comment>
<comment type="pathway">
    <text evidence="1">Amino-acid biosynthesis; L-tryptophan biosynthesis; L-tryptophan from chorismate: step 3/5.</text>
</comment>
<comment type="similarity">
    <text evidence="1">Belongs to the TrpF family.</text>
</comment>
<comment type="sequence caution" evidence="2">
    <conflict type="erroneous initiation">
        <sequence resource="EMBL-CDS" id="AAO28483"/>
    </conflict>
</comment>
<organism>
    <name type="scientific">Xylella fastidiosa (strain Temecula1 / ATCC 700964)</name>
    <dbReference type="NCBI Taxonomy" id="183190"/>
    <lineage>
        <taxon>Bacteria</taxon>
        <taxon>Pseudomonadati</taxon>
        <taxon>Pseudomonadota</taxon>
        <taxon>Gammaproteobacteria</taxon>
        <taxon>Lysobacterales</taxon>
        <taxon>Lysobacteraceae</taxon>
        <taxon>Xylella</taxon>
    </lineage>
</organism>
<reference key="1">
    <citation type="journal article" date="2003" name="J. Bacteriol.">
        <title>Comparative analyses of the complete genome sequences of Pierce's disease and citrus variegated chlorosis strains of Xylella fastidiosa.</title>
        <authorList>
            <person name="Van Sluys M.A."/>
            <person name="de Oliveira M.C."/>
            <person name="Monteiro-Vitorello C.B."/>
            <person name="Miyaki C.Y."/>
            <person name="Furlan L.R."/>
            <person name="Camargo L.E.A."/>
            <person name="da Silva A.C.R."/>
            <person name="Moon D.H."/>
            <person name="Takita M.A."/>
            <person name="Lemos E.G.M."/>
            <person name="Machado M.A."/>
            <person name="Ferro M.I.T."/>
            <person name="da Silva F.R."/>
            <person name="Goldman M.H.S."/>
            <person name="Goldman G.H."/>
            <person name="Lemos M.V.F."/>
            <person name="El-Dorry H."/>
            <person name="Tsai S.M."/>
            <person name="Carrer H."/>
            <person name="Carraro D.M."/>
            <person name="de Oliveira R.C."/>
            <person name="Nunes L.R."/>
            <person name="Siqueira W.J."/>
            <person name="Coutinho L.L."/>
            <person name="Kimura E.T."/>
            <person name="Ferro E.S."/>
            <person name="Harakava R."/>
            <person name="Kuramae E.E."/>
            <person name="Marino C.L."/>
            <person name="Giglioti E."/>
            <person name="Abreu I.L."/>
            <person name="Alves L.M.C."/>
            <person name="do Amaral A.M."/>
            <person name="Baia G.S."/>
            <person name="Blanco S.R."/>
            <person name="Brito M.S."/>
            <person name="Cannavan F.S."/>
            <person name="Celestino A.V."/>
            <person name="da Cunha A.F."/>
            <person name="Fenille R.C."/>
            <person name="Ferro J.A."/>
            <person name="Formighieri E.F."/>
            <person name="Kishi L.T."/>
            <person name="Leoni S.G."/>
            <person name="Oliveira A.R."/>
            <person name="Rosa V.E. Jr."/>
            <person name="Sassaki F.T."/>
            <person name="Sena J.A.D."/>
            <person name="de Souza A.A."/>
            <person name="Truffi D."/>
            <person name="Tsukumo F."/>
            <person name="Yanai G.M."/>
            <person name="Zaros L.G."/>
            <person name="Civerolo E.L."/>
            <person name="Simpson A.J.G."/>
            <person name="Almeida N.F. Jr."/>
            <person name="Setubal J.C."/>
            <person name="Kitajima J.P."/>
        </authorList>
    </citation>
    <scope>NUCLEOTIDE SEQUENCE [LARGE SCALE GENOMIC DNA]</scope>
    <source>
        <strain>Temecula1 / ATCC 700964</strain>
    </source>
</reference>
<evidence type="ECO:0000255" key="1">
    <source>
        <dbReference type="HAMAP-Rule" id="MF_00135"/>
    </source>
</evidence>
<evidence type="ECO:0000305" key="2"/>
<gene>
    <name evidence="1" type="primary">trpF</name>
    <name type="ordered locus">PD_0611</name>
</gene>
<dbReference type="EC" id="5.3.1.24" evidence="1"/>
<dbReference type="EMBL" id="AE009442">
    <property type="protein sequence ID" value="AAO28483.1"/>
    <property type="status" value="ALT_INIT"/>
    <property type="molecule type" value="Genomic_DNA"/>
</dbReference>
<dbReference type="RefSeq" id="WP_004090663.1">
    <property type="nucleotide sequence ID" value="NC_004556.1"/>
</dbReference>
<dbReference type="SMR" id="Q87DS0"/>
<dbReference type="KEGG" id="xft:PD_0611"/>
<dbReference type="HOGENOM" id="CLU_076364_2_0_6"/>
<dbReference type="UniPathway" id="UPA00035">
    <property type="reaction ID" value="UER00042"/>
</dbReference>
<dbReference type="Proteomes" id="UP000002516">
    <property type="component" value="Chromosome"/>
</dbReference>
<dbReference type="GO" id="GO:0004640">
    <property type="term" value="F:phosphoribosylanthranilate isomerase activity"/>
    <property type="evidence" value="ECO:0007669"/>
    <property type="project" value="UniProtKB-UniRule"/>
</dbReference>
<dbReference type="GO" id="GO:0000162">
    <property type="term" value="P:L-tryptophan biosynthetic process"/>
    <property type="evidence" value="ECO:0007669"/>
    <property type="project" value="UniProtKB-UniRule"/>
</dbReference>
<dbReference type="CDD" id="cd00405">
    <property type="entry name" value="PRAI"/>
    <property type="match status" value="1"/>
</dbReference>
<dbReference type="Gene3D" id="3.20.20.70">
    <property type="entry name" value="Aldolase class I"/>
    <property type="match status" value="1"/>
</dbReference>
<dbReference type="HAMAP" id="MF_00135">
    <property type="entry name" value="PRAI"/>
    <property type="match status" value="1"/>
</dbReference>
<dbReference type="InterPro" id="IPR013785">
    <property type="entry name" value="Aldolase_TIM"/>
</dbReference>
<dbReference type="InterPro" id="IPR001240">
    <property type="entry name" value="PRAI_dom"/>
</dbReference>
<dbReference type="InterPro" id="IPR011060">
    <property type="entry name" value="RibuloseP-bd_barrel"/>
</dbReference>
<dbReference type="InterPro" id="IPR044643">
    <property type="entry name" value="TrpF_fam"/>
</dbReference>
<dbReference type="NCBIfam" id="NF002296">
    <property type="entry name" value="PRK01222.1-2"/>
    <property type="match status" value="1"/>
</dbReference>
<dbReference type="PANTHER" id="PTHR42894">
    <property type="entry name" value="N-(5'-PHOSPHORIBOSYL)ANTHRANILATE ISOMERASE"/>
    <property type="match status" value="1"/>
</dbReference>
<dbReference type="PANTHER" id="PTHR42894:SF1">
    <property type="entry name" value="N-(5'-PHOSPHORIBOSYL)ANTHRANILATE ISOMERASE"/>
    <property type="match status" value="1"/>
</dbReference>
<dbReference type="Pfam" id="PF00697">
    <property type="entry name" value="PRAI"/>
    <property type="match status" value="1"/>
</dbReference>
<dbReference type="SUPFAM" id="SSF51366">
    <property type="entry name" value="Ribulose-phoshate binding barrel"/>
    <property type="match status" value="1"/>
</dbReference>
<accession>Q87DS0</accession>
<proteinExistence type="inferred from homology"/>
<sequence>MNIPPYRTRIKFCGMTRVGDVRLASELGVDAVGLIFASGSSRLLTVSAACAIRRTVAPMVDVVALFQNNSADEIHTVVRTVRPTLLQFHGKEEDAFCRTFNVPYLKAIPMAGAEAKRICTRTLYLKYPNAAGFIFDSHLKGGTGQTFDWSRLPIDLHHPFLLAGGITPENVFDAIAATVPWGVDVSSGIELQPGIKDGDKMRQFVEEVRRADGRRLLGVP</sequence>
<feature type="chain" id="PRO_0000154395" description="N-(5'-phosphoribosyl)anthranilate isomerase">
    <location>
        <begin position="1"/>
        <end position="220"/>
    </location>
</feature>
<protein>
    <recommendedName>
        <fullName evidence="1">N-(5'-phosphoribosyl)anthranilate isomerase</fullName>
        <shortName evidence="1">PRAI</shortName>
        <ecNumber evidence="1">5.3.1.24</ecNumber>
    </recommendedName>
</protein>
<keyword id="KW-0028">Amino-acid biosynthesis</keyword>
<keyword id="KW-0057">Aromatic amino acid biosynthesis</keyword>
<keyword id="KW-0413">Isomerase</keyword>
<keyword id="KW-1185">Reference proteome</keyword>
<keyword id="KW-0822">Tryptophan biosynthesis</keyword>